<reference key="1">
    <citation type="journal article" date="1996" name="Yeast">
        <title>Sequence analysis of the CEN12 region of Saccharomyces cerevisiae on a 43.7 kb fragment of chromosome XII including an open reading frame homologous to the human cystic fibrosis transmembrane conductance regulator protein CFTR.</title>
        <authorList>
            <person name="Miosga T."/>
            <person name="Zimmermann F.K."/>
        </authorList>
    </citation>
    <scope>NUCLEOTIDE SEQUENCE [GENOMIC DNA]</scope>
    <source>
        <strain>ATCC 90840 / EAY235 / FY23</strain>
    </source>
</reference>
<reference key="2">
    <citation type="journal article" date="1997" name="Yeast">
        <title>The sequence of 32kb on the left arm of yeast chromosome XII reveals six known genes, a new member of the seripauperins family and a new ABC transporter homologous to the human multidrug resistance protein.</title>
        <authorList>
            <person name="Purnelle B."/>
            <person name="Goffeau A."/>
        </authorList>
    </citation>
    <scope>NUCLEOTIDE SEQUENCE [GENOMIC DNA]</scope>
    <source>
        <strain>ATCC 204508 / S288c</strain>
    </source>
</reference>
<reference key="3">
    <citation type="journal article" date="1997" name="Nature">
        <title>The nucleotide sequence of Saccharomyces cerevisiae chromosome XII.</title>
        <authorList>
            <person name="Johnston M."/>
            <person name="Hillier L.W."/>
            <person name="Riles L."/>
            <person name="Albermann K."/>
            <person name="Andre B."/>
            <person name="Ansorge W."/>
            <person name="Benes V."/>
            <person name="Brueckner M."/>
            <person name="Delius H."/>
            <person name="Dubois E."/>
            <person name="Duesterhoeft A."/>
            <person name="Entian K.-D."/>
            <person name="Floeth M."/>
            <person name="Goffeau A."/>
            <person name="Hebling U."/>
            <person name="Heumann K."/>
            <person name="Heuss-Neitzel D."/>
            <person name="Hilbert H."/>
            <person name="Hilger F."/>
            <person name="Kleine K."/>
            <person name="Koetter P."/>
            <person name="Louis E.J."/>
            <person name="Messenguy F."/>
            <person name="Mewes H.-W."/>
            <person name="Miosga T."/>
            <person name="Moestl D."/>
            <person name="Mueller-Auer S."/>
            <person name="Nentwich U."/>
            <person name="Obermaier B."/>
            <person name="Piravandi E."/>
            <person name="Pohl T.M."/>
            <person name="Portetelle D."/>
            <person name="Purnelle B."/>
            <person name="Rechmann S."/>
            <person name="Rieger M."/>
            <person name="Rinke M."/>
            <person name="Rose M."/>
            <person name="Scharfe M."/>
            <person name="Scherens B."/>
            <person name="Scholler P."/>
            <person name="Schwager C."/>
            <person name="Schwarz S."/>
            <person name="Underwood A.P."/>
            <person name="Urrestarazu L.A."/>
            <person name="Vandenbol M."/>
            <person name="Verhasselt P."/>
            <person name="Vierendeels F."/>
            <person name="Voet M."/>
            <person name="Volckaert G."/>
            <person name="Voss H."/>
            <person name="Wambutt R."/>
            <person name="Wedler E."/>
            <person name="Wedler H."/>
            <person name="Zimmermann F.K."/>
            <person name="Zollner A."/>
            <person name="Hani J."/>
            <person name="Hoheisel J.D."/>
        </authorList>
    </citation>
    <scope>NUCLEOTIDE SEQUENCE [LARGE SCALE GENOMIC DNA]</scope>
    <source>
        <strain>ATCC 204508 / S288c</strain>
    </source>
</reference>
<reference key="4">
    <citation type="journal article" date="2014" name="G3 (Bethesda)">
        <title>The reference genome sequence of Saccharomyces cerevisiae: Then and now.</title>
        <authorList>
            <person name="Engel S.R."/>
            <person name="Dietrich F.S."/>
            <person name="Fisk D.G."/>
            <person name="Binkley G."/>
            <person name="Balakrishnan R."/>
            <person name="Costanzo M.C."/>
            <person name="Dwight S.S."/>
            <person name="Hitz B.C."/>
            <person name="Karra K."/>
            <person name="Nash R.S."/>
            <person name="Weng S."/>
            <person name="Wong E.D."/>
            <person name="Lloyd P."/>
            <person name="Skrzypek M.S."/>
            <person name="Miyasato S.R."/>
            <person name="Simison M."/>
            <person name="Cherry J.M."/>
        </authorList>
    </citation>
    <scope>GENOME REANNOTATION</scope>
    <source>
        <strain>ATCC 204508 / S288c</strain>
    </source>
</reference>
<reference key="5">
    <citation type="journal article" date="1989" name="Gene">
        <title>The C-terminal part of a gene partially homologous to CDC 25 gene suppresses the cdc25-5 mutation in Saccharomyces cerevisiae.</title>
        <authorList>
            <person name="Boy-Marcotte E."/>
            <person name="Damak F."/>
            <person name="Camonis J."/>
            <person name="Garreau H."/>
            <person name="Jacquet M."/>
        </authorList>
    </citation>
    <scope>NUCLEOTIDE SEQUENCE [GENOMIC DNA] OF 1-245</scope>
</reference>
<reference key="6">
    <citation type="journal article" date="2000" name="Yeast">
        <title>The products of YCF1 and YLL015w (BPT1) cooperate for the ATP-dependent vacuolar transport of unconjugated bilirubin in Saccharomyces cerevisiae.</title>
        <authorList>
            <person name="Petrovic S."/>
            <person name="Pascolo L."/>
            <person name="Gallo R."/>
            <person name="Cupelli F."/>
            <person name="Ostrow J.D."/>
            <person name="Goffeau A."/>
            <person name="Tiribelli C."/>
            <person name="Bruschi C.V."/>
        </authorList>
    </citation>
    <scope>FUNCTION</scope>
</reference>
<reference key="7">
    <citation type="journal article" date="2002" name="FEBS Lett.">
        <title>The ATP-binding cassette (ABC) transporter Bpt1p mediates vacuolar sequestration of glutathione conjugates in yeast.</title>
        <authorList>
            <person name="Klein M."/>
            <person name="Mamnun Y.M."/>
            <person name="Eggmann T."/>
            <person name="Schueller C."/>
            <person name="Wolfger H."/>
            <person name="Martinoia E."/>
            <person name="Kuchler K."/>
        </authorList>
    </citation>
    <scope>FUNCTION</scope>
    <scope>SUBCELLULAR LOCATION</scope>
    <scope>DEVELOPMENTAL STAGE</scope>
</reference>
<reference key="8">
    <citation type="journal article" date="2006" name="Proc. Natl. Acad. Sci. U.S.A.">
        <title>A global topology map of the Saccharomyces cerevisiae membrane proteome.</title>
        <authorList>
            <person name="Kim H."/>
            <person name="Melen K."/>
            <person name="Oesterberg M."/>
            <person name="von Heijne G."/>
        </authorList>
    </citation>
    <scope>TOPOLOGY [LARGE SCALE ANALYSIS]</scope>
    <source>
        <strain>ATCC 208353 / W303-1A</strain>
    </source>
</reference>
<reference key="9">
    <citation type="journal article" date="2007" name="J. Proteome Res.">
        <title>Large-scale phosphorylation analysis of alpha-factor-arrested Saccharomyces cerevisiae.</title>
        <authorList>
            <person name="Li X."/>
            <person name="Gerber S.A."/>
            <person name="Rudner A.D."/>
            <person name="Beausoleil S.A."/>
            <person name="Haas W."/>
            <person name="Villen J."/>
            <person name="Elias J.E."/>
            <person name="Gygi S.P."/>
        </authorList>
    </citation>
    <scope>PHOSPHORYLATION [LARGE SCALE ANALYSIS] AT SER-645</scope>
    <scope>IDENTIFICATION BY MASS SPECTROMETRY [LARGE SCALE ANALYSIS]</scope>
    <source>
        <strain>ADR376</strain>
    </source>
</reference>
<reference key="10">
    <citation type="journal article" date="2007" name="Proc. Natl. Acad. Sci. U.S.A.">
        <title>Analysis of phosphorylation sites on proteins from Saccharomyces cerevisiae by electron transfer dissociation (ETD) mass spectrometry.</title>
        <authorList>
            <person name="Chi A."/>
            <person name="Huttenhower C."/>
            <person name="Geer L.Y."/>
            <person name="Coon J.J."/>
            <person name="Syka J.E.P."/>
            <person name="Bai D.L."/>
            <person name="Shabanowitz J."/>
            <person name="Burke D.J."/>
            <person name="Troyanskaya O.G."/>
            <person name="Hunt D.F."/>
        </authorList>
    </citation>
    <scope>PHOSPHORYLATION [LARGE SCALE ANALYSIS] AT SER-927; SER-931 AND THR-934</scope>
    <scope>IDENTIFICATION BY MASS SPECTROMETRY [LARGE SCALE ANALYSIS]</scope>
</reference>
<reference key="11">
    <citation type="journal article" date="2008" name="Mol. Cell. Proteomics">
        <title>A multidimensional chromatography technology for in-depth phosphoproteome analysis.</title>
        <authorList>
            <person name="Albuquerque C.P."/>
            <person name="Smolka M.B."/>
            <person name="Payne S.H."/>
            <person name="Bafna V."/>
            <person name="Eng J."/>
            <person name="Zhou H."/>
        </authorList>
    </citation>
    <scope>PHOSPHORYLATION [LARGE SCALE ANALYSIS] AT SER-645 AND THR-916</scope>
    <scope>IDENTIFICATION BY MASS SPECTROMETRY [LARGE SCALE ANALYSIS]</scope>
</reference>
<reference key="12">
    <citation type="journal article" date="2009" name="Science">
        <title>Global analysis of Cdk1 substrate phosphorylation sites provides insights into evolution.</title>
        <authorList>
            <person name="Holt L.J."/>
            <person name="Tuch B.B."/>
            <person name="Villen J."/>
            <person name="Johnson A.D."/>
            <person name="Gygi S.P."/>
            <person name="Morgan D.O."/>
        </authorList>
    </citation>
    <scope>PHOSPHORYLATION [LARGE SCALE ANALYSIS] AT SER-645; SER-885; THR-889; SER-893; SER-895 AND THR-916</scope>
    <scope>IDENTIFICATION BY MASS SPECTROMETRY [LARGE SCALE ANALYSIS]</scope>
</reference>
<accession>P14772</accession>
<accession>D6VXY7</accession>
<comment type="function">
    <text evidence="5 6">Cooperates for the ATP-dependent vacuolar transport of bilirubin and glutathione conjugates.</text>
</comment>
<comment type="subcellular location">
    <subcellularLocation>
        <location evidence="6">Vacuole membrane</location>
        <topology evidence="3 6">Multi-pass membrane protein</topology>
    </subcellularLocation>
</comment>
<comment type="developmental stage">
    <text evidence="6">Levels increase in early stationary phase.</text>
</comment>
<comment type="similarity">
    <text evidence="7">Belongs to the ABC transporter superfamily.</text>
</comment>
<sequence>MSSLEVVDGCPYGYRPYPDSGTNALNPCFISVISAWQAVFFLLIGSYQLWKLYKNNKVPPRFKNFPTLPSKINSRHLTHLTNVCFQSTLIICELALVSQSSDRVYPFILKKALYLNLLFNLGISLPTQYLAYFKSTFSMGNQLFYYMFQILLQLFLILQRYYHGSSNERLTVISGQTAMILEVLLLFNSVAIFIYDLCIFEPINELSEYYKKNGWYPPVHVLSYITFIWMNKLIVETYRNKKIKDPNQLPLPPVDLNIKSISKEFKANWELEKWLNRNSLWRAIWKSFGRTISVAMLYETTSDLLSVVQPQFLRIFIDGLNPETSSKYPPLNGVFIALTLFVISVVSVFLTNQFYIGIFEAGLGIRGSLASLVYQKSLRLTLAERNEKSTGDILNLMSVDVLRIQRFFENAQTIIGAPIQIIVVLTSLYWLLGKAVIGGLVTMAIMMPINAFLSRKVKKLSKTQMKYKDMRIKTITELLNAIKSIKLYAWEEPMMARLNHVRNDMELKNFRKIGIVSNLIYFAWNCVPLMVTCSTFGLFSLFSDSPLSPAIVFPSLSLFNILNSAIYSVPSMINTIIETSVSMERLKSFLLSDEIDDSFIERIDPSADERALPAIEMNNITFLWKSKEVLTSSQSGDNLRTDEESIIGSSQIALKNIDHFEAKRGDLVCVVGRVGAGKSTFLKAILGQLPCMSGSRDSIPPKLIIRSSSVAYCSQESWIMNASVRENILFGHKFDQDYYDLTIKACQLLPDLKILPDGDETLVGEKGISLSGGQKARLSLARAVYSRADIYLLDDILSAVDAEVSKNIIEYVLIGKTALLKNKTIILTTNTVSILKHSQMIYALENGEIVEQGNYEDVMNRKNNTSKLKKLLEEFDSPIDNGNESDVQTEHRSESEVDEPLQLKVTESETEDEVVTESELELIKANSRRASLATLRPRPFVGAQLDSVKKTAQKAEKTEVGRVKTKIYLAYIKACGVLGVVLFFLFMILTRVFDLAENFWLKYWSESNEKNGSNERVWMFVGVYSLIGVASAAFNNLRSIMMLLYCSIRGSKKLHESMAKSVIRSPMTFFETTPVGRIINRFSSDMDAVDSNLQYIFSFFFKSILTYLVTVILVGYNMPWFLVFNMFLVVIYIYYQTFYIVLSRELKRLISISYSPIMSLMSESLNGYSIIDAYDHFERFIYLNYEKIQYNVDFVFNFRSTNRWLSVRLQTIGATIVLATAILALATMNTKRQLSSGMVGLLMSYSLEVTGSLTWIVRTTVTIETNIVSVERIVEYCELPPEAQSINPEKRPDENWPSKGGIEFKNYSTKYRENLDPVLNNINVKIEPCEKVGIVGRTGAGKSTLSLALFRILEPTEGKIIIDGIDISDIGLFDLRSHLAIIPQDAQAFEGTVKTNLDPFNRYSEDELKRAVEQAHLKPHLEKMLHSKPRGDDSNEEDGNVNDILDVKINENGSNLSVGQRQLLCLARALLNRSKILVLDEATASVDMETDKIIQDTIRREFKDRTILTIAHRIDTVLDSDKIIVLDQGSVREFDSPSKLLSDKTSIFYSLCEKGGYLK</sequence>
<evidence type="ECO:0000255" key="1"/>
<evidence type="ECO:0000255" key="2">
    <source>
        <dbReference type="PROSITE-ProRule" id="PRU00434"/>
    </source>
</evidence>
<evidence type="ECO:0000255" key="3">
    <source>
        <dbReference type="PROSITE-ProRule" id="PRU00441"/>
    </source>
</evidence>
<evidence type="ECO:0000256" key="4">
    <source>
        <dbReference type="SAM" id="MobiDB-lite"/>
    </source>
</evidence>
<evidence type="ECO:0000269" key="5">
    <source>
    </source>
</evidence>
<evidence type="ECO:0000269" key="6">
    <source>
    </source>
</evidence>
<evidence type="ECO:0000305" key="7"/>
<evidence type="ECO:0007744" key="8">
    <source>
    </source>
</evidence>
<evidence type="ECO:0007744" key="9">
    <source>
    </source>
</evidence>
<evidence type="ECO:0007744" key="10">
    <source>
    </source>
</evidence>
<evidence type="ECO:0007744" key="11">
    <source>
    </source>
</evidence>
<keyword id="KW-0067">ATP-binding</keyword>
<keyword id="KW-0325">Glycoprotein</keyword>
<keyword id="KW-0472">Membrane</keyword>
<keyword id="KW-0547">Nucleotide-binding</keyword>
<keyword id="KW-0597">Phosphoprotein</keyword>
<keyword id="KW-1185">Reference proteome</keyword>
<keyword id="KW-0677">Repeat</keyword>
<keyword id="KW-0812">Transmembrane</keyword>
<keyword id="KW-1133">Transmembrane helix</keyword>
<keyword id="KW-0813">Transport</keyword>
<keyword id="KW-0926">Vacuole</keyword>
<name>BPT1_YEAST</name>
<proteinExistence type="evidence at protein level"/>
<protein>
    <recommendedName>
        <fullName>Bile pigment transporter 1</fullName>
    </recommendedName>
</protein>
<feature type="chain" id="PRO_0000093448" description="Bile pigment transporter 1">
    <location>
        <begin position="1"/>
        <end position="1559"/>
    </location>
</feature>
<feature type="topological domain" description="Vacuolar" evidence="1">
    <location>
        <begin position="1"/>
        <end position="29"/>
    </location>
</feature>
<feature type="transmembrane region" description="Helical; Name=1" evidence="3">
    <location>
        <begin position="30"/>
        <end position="50"/>
    </location>
</feature>
<feature type="topological domain" description="Cytoplasmic" evidence="1">
    <location>
        <begin position="51"/>
        <end position="84"/>
    </location>
</feature>
<feature type="transmembrane region" description="Helical; Name=2" evidence="3">
    <location>
        <begin position="85"/>
        <end position="105"/>
    </location>
</feature>
<feature type="topological domain" description="Vacuolar" evidence="1">
    <location>
        <begin position="106"/>
        <end position="110"/>
    </location>
</feature>
<feature type="transmembrane region" description="Helical; Name=3" evidence="3">
    <location>
        <begin position="111"/>
        <end position="127"/>
    </location>
</feature>
<feature type="topological domain" description="Cytoplasmic" evidence="1">
    <location>
        <begin position="128"/>
        <end position="139"/>
    </location>
</feature>
<feature type="transmembrane region" description="Helical; Name=4" evidence="3">
    <location>
        <begin position="140"/>
        <end position="160"/>
    </location>
</feature>
<feature type="topological domain" description="Vacuolar" evidence="1">
    <location>
        <begin position="161"/>
        <end position="178"/>
    </location>
</feature>
<feature type="transmembrane region" description="Helical; Name=5" evidence="3">
    <location>
        <begin position="179"/>
        <end position="199"/>
    </location>
</feature>
<feature type="topological domain" description="Cytoplasmic" evidence="1">
    <location>
        <begin position="200"/>
        <end position="283"/>
    </location>
</feature>
<feature type="transmembrane region" description="Helical; Name=6" evidence="3">
    <location>
        <begin position="284"/>
        <end position="304"/>
    </location>
</feature>
<feature type="topological domain" description="Vacuolar" evidence="1">
    <location>
        <begin position="305"/>
        <end position="333"/>
    </location>
</feature>
<feature type="transmembrane region" description="Helical; Name=7" evidence="3">
    <location>
        <begin position="334"/>
        <end position="354"/>
    </location>
</feature>
<feature type="topological domain" description="Cytoplasmic" evidence="1">
    <location>
        <begin position="355"/>
        <end position="410"/>
    </location>
</feature>
<feature type="transmembrane region" description="Helical; Name=8" evidence="3">
    <location>
        <begin position="411"/>
        <end position="431"/>
    </location>
</feature>
<feature type="topological domain" description="Vacuolar" evidence="1">
    <location>
        <begin position="432"/>
        <end position="434"/>
    </location>
</feature>
<feature type="transmembrane region" description="Helical; Name=9" evidence="3">
    <location>
        <begin position="435"/>
        <end position="455"/>
    </location>
</feature>
<feature type="topological domain" description="Cytoplasmic" evidence="1">
    <location>
        <begin position="456"/>
        <end position="518"/>
    </location>
</feature>
<feature type="transmembrane region" description="Helical; Name=10" evidence="3">
    <location>
        <begin position="519"/>
        <end position="539"/>
    </location>
</feature>
<feature type="topological domain" description="Vacuolar" evidence="1">
    <location>
        <begin position="540"/>
        <end position="560"/>
    </location>
</feature>
<feature type="transmembrane region" description="Helical; Name=11" evidence="3">
    <location>
        <begin position="561"/>
        <end position="581"/>
    </location>
</feature>
<feature type="topological domain" description="Cytoplasmic" evidence="1">
    <location>
        <begin position="582"/>
        <end position="972"/>
    </location>
</feature>
<feature type="transmembrane region" description="Helical; Name=12" evidence="3">
    <location>
        <begin position="973"/>
        <end position="993"/>
    </location>
</feature>
<feature type="topological domain" description="Vacuolar" evidence="1">
    <location>
        <begin position="994"/>
        <end position="1030"/>
    </location>
</feature>
<feature type="transmembrane region" description="Helical; Name=13" evidence="3">
    <location>
        <begin position="1031"/>
        <end position="1052"/>
    </location>
</feature>
<feature type="topological domain" description="Cytoplasmic" evidence="1">
    <location>
        <begin position="1053"/>
        <end position="1095"/>
    </location>
</feature>
<feature type="transmembrane region" description="Helical; Name=14" evidence="3">
    <location>
        <begin position="1096"/>
        <end position="1116"/>
    </location>
</feature>
<feature type="topological domain" description="Vacuolar" evidence="1">
    <location>
        <position position="1117"/>
    </location>
</feature>
<feature type="transmembrane region" description="Helical; Name=15" evidence="3">
    <location>
        <begin position="1118"/>
        <end position="1138"/>
    </location>
</feature>
<feature type="topological domain" description="Cytoplasmic" evidence="1">
    <location>
        <begin position="1139"/>
        <end position="1209"/>
    </location>
</feature>
<feature type="transmembrane region" description="Helical; Name=16" evidence="3">
    <location>
        <begin position="1210"/>
        <end position="1230"/>
    </location>
</feature>
<feature type="topological domain" description="Vacuolar" evidence="1">
    <location>
        <begin position="1231"/>
        <end position="1235"/>
    </location>
</feature>
<feature type="transmembrane region" description="Helical; Name=17" evidence="3">
    <location>
        <begin position="1236"/>
        <end position="1256"/>
    </location>
</feature>
<feature type="topological domain" description="Cytoplasmic" evidence="1">
    <location>
        <begin position="1257"/>
        <end position="1559"/>
    </location>
</feature>
<feature type="domain" description="ABC transmembrane type-1 1" evidence="3">
    <location>
        <begin position="292"/>
        <end position="578"/>
    </location>
</feature>
<feature type="domain" description="ABC transporter 1" evidence="2">
    <location>
        <begin position="639"/>
        <end position="871"/>
    </location>
</feature>
<feature type="domain" description="ABC transmembrane type-1 2" evidence="3">
    <location>
        <begin position="980"/>
        <end position="1265"/>
    </location>
</feature>
<feature type="domain" description="ABC transporter 2" evidence="2">
    <location>
        <begin position="1302"/>
        <end position="1553"/>
    </location>
</feature>
<feature type="region of interest" description="Disordered" evidence="4">
    <location>
        <begin position="877"/>
        <end position="899"/>
    </location>
</feature>
<feature type="region of interest" description="Disordered" evidence="4">
    <location>
        <begin position="1420"/>
        <end position="1439"/>
    </location>
</feature>
<feature type="compositionally biased region" description="Basic and acidic residues" evidence="4">
    <location>
        <begin position="1420"/>
        <end position="1433"/>
    </location>
</feature>
<feature type="binding site" evidence="2">
    <location>
        <begin position="672"/>
        <end position="679"/>
    </location>
    <ligand>
        <name>ATP</name>
        <dbReference type="ChEBI" id="CHEBI:30616"/>
        <label>1</label>
    </ligand>
</feature>
<feature type="binding site" evidence="2">
    <location>
        <begin position="1336"/>
        <end position="1343"/>
    </location>
    <ligand>
        <name>ATP</name>
        <dbReference type="ChEBI" id="CHEBI:30616"/>
        <label>2</label>
    </ligand>
</feature>
<feature type="modified residue" description="Phosphoserine" evidence="9 10 11">
    <location>
        <position position="645"/>
    </location>
</feature>
<feature type="modified residue" description="Phosphoserine" evidence="11">
    <location>
        <position position="885"/>
    </location>
</feature>
<feature type="modified residue" description="Phosphothreonine" evidence="11">
    <location>
        <position position="889"/>
    </location>
</feature>
<feature type="modified residue" description="Phosphoserine" evidence="11">
    <location>
        <position position="893"/>
    </location>
</feature>
<feature type="modified residue" description="Phosphoserine" evidence="11">
    <location>
        <position position="895"/>
    </location>
</feature>
<feature type="modified residue" description="Phosphothreonine" evidence="10 11">
    <location>
        <position position="916"/>
    </location>
</feature>
<feature type="modified residue" description="Phosphoserine" evidence="8">
    <location>
        <position position="927"/>
    </location>
</feature>
<feature type="modified residue" description="Phosphoserine" evidence="8">
    <location>
        <position position="931"/>
    </location>
</feature>
<feature type="modified residue" description="Phosphothreonine" evidence="8">
    <location>
        <position position="934"/>
    </location>
</feature>
<feature type="glycosylation site" description="N-linked (GlcNAc...) asparagine" evidence="1">
    <location>
        <position position="1011"/>
    </location>
</feature>
<gene>
    <name type="primary">BPT1</name>
    <name type="ordered locus">YLL015W</name>
    <name type="ORF">L1313</name>
</gene>
<dbReference type="EMBL" id="X97560">
    <property type="protein sequence ID" value="CAA66162.1"/>
    <property type="molecule type" value="Genomic_DNA"/>
</dbReference>
<dbReference type="EMBL" id="Z73120">
    <property type="protein sequence ID" value="CAA97460.1"/>
    <property type="molecule type" value="Genomic_DNA"/>
</dbReference>
<dbReference type="EMBL" id="X91488">
    <property type="protein sequence ID" value="CAA62776.1"/>
    <property type="molecule type" value="Genomic_DNA"/>
</dbReference>
<dbReference type="EMBL" id="M26647">
    <property type="protein sequence ID" value="AAA16564.1"/>
    <property type="molecule type" value="Genomic_DNA"/>
</dbReference>
<dbReference type="EMBL" id="BK006945">
    <property type="protein sequence ID" value="DAA09303.1"/>
    <property type="molecule type" value="Genomic_DNA"/>
</dbReference>
<dbReference type="PIR" id="S64757">
    <property type="entry name" value="S64757"/>
</dbReference>
<dbReference type="RefSeq" id="NP_013086.1">
    <property type="nucleotide sequence ID" value="NM_001181835.1"/>
</dbReference>
<dbReference type="SMR" id="P14772"/>
<dbReference type="BioGRID" id="31236">
    <property type="interactions" value="138"/>
</dbReference>
<dbReference type="DIP" id="DIP-2866N"/>
<dbReference type="FunCoup" id="P14772">
    <property type="interactions" value="240"/>
</dbReference>
<dbReference type="IntAct" id="P14772">
    <property type="interactions" value="24"/>
</dbReference>
<dbReference type="MINT" id="P14772"/>
<dbReference type="STRING" id="4932.YLL015W"/>
<dbReference type="TCDB" id="3.A.1.208.18">
    <property type="family name" value="the atp-binding cassette (abc) superfamily"/>
</dbReference>
<dbReference type="GlyCosmos" id="P14772">
    <property type="glycosylation" value="1 site, No reported glycans"/>
</dbReference>
<dbReference type="GlyGen" id="P14772">
    <property type="glycosylation" value="1 site"/>
</dbReference>
<dbReference type="iPTMnet" id="P14772"/>
<dbReference type="PaxDb" id="4932-YLL015W"/>
<dbReference type="PeptideAtlas" id="P14772"/>
<dbReference type="EnsemblFungi" id="YLL015W_mRNA">
    <property type="protein sequence ID" value="YLL015W"/>
    <property type="gene ID" value="YLL015W"/>
</dbReference>
<dbReference type="GeneID" id="850645"/>
<dbReference type="KEGG" id="sce:YLL015W"/>
<dbReference type="AGR" id="SGD:S000003938"/>
<dbReference type="SGD" id="S000003938">
    <property type="gene designation" value="BPT1"/>
</dbReference>
<dbReference type="VEuPathDB" id="FungiDB:YLL015W"/>
<dbReference type="eggNOG" id="KOG0054">
    <property type="taxonomic scope" value="Eukaryota"/>
</dbReference>
<dbReference type="GeneTree" id="ENSGT00940000157145"/>
<dbReference type="HOGENOM" id="CLU_000604_27_3_1"/>
<dbReference type="InParanoid" id="P14772"/>
<dbReference type="OMA" id="KTWIMAF"/>
<dbReference type="OrthoDB" id="6500128at2759"/>
<dbReference type="BioCyc" id="YEAST:G3O-32120-MONOMER"/>
<dbReference type="Reactome" id="R-SCE-159418">
    <property type="pathway name" value="Recycling of bile acids and salts"/>
</dbReference>
<dbReference type="Reactome" id="R-SCE-189483">
    <property type="pathway name" value="Heme degradation"/>
</dbReference>
<dbReference type="Reactome" id="R-SCE-382556">
    <property type="pathway name" value="ABC-family proteins mediated transport"/>
</dbReference>
<dbReference type="Reactome" id="R-SCE-9749641">
    <property type="pathway name" value="Aspirin ADME"/>
</dbReference>
<dbReference type="Reactome" id="R-SCE-9753281">
    <property type="pathway name" value="Paracetamol ADME"/>
</dbReference>
<dbReference type="Reactome" id="R-SCE-9754706">
    <property type="pathway name" value="Atorvastatin ADME"/>
</dbReference>
<dbReference type="BioGRID-ORCS" id="850645">
    <property type="hits" value="0 hits in 10 CRISPR screens"/>
</dbReference>
<dbReference type="PRO" id="PR:P14772"/>
<dbReference type="Proteomes" id="UP000002311">
    <property type="component" value="Chromosome XII"/>
</dbReference>
<dbReference type="RNAct" id="P14772">
    <property type="molecule type" value="protein"/>
</dbReference>
<dbReference type="GO" id="GO:0005783">
    <property type="term" value="C:endoplasmic reticulum"/>
    <property type="evidence" value="ECO:0007005"/>
    <property type="project" value="SGD"/>
</dbReference>
<dbReference type="GO" id="GO:0000324">
    <property type="term" value="C:fungal-type vacuole"/>
    <property type="evidence" value="ECO:0000318"/>
    <property type="project" value="GO_Central"/>
</dbReference>
<dbReference type="GO" id="GO:0000329">
    <property type="term" value="C:fungal-type vacuole membrane"/>
    <property type="evidence" value="ECO:0000314"/>
    <property type="project" value="SGD"/>
</dbReference>
<dbReference type="GO" id="GO:0016020">
    <property type="term" value="C:membrane"/>
    <property type="evidence" value="ECO:0000318"/>
    <property type="project" value="GO_Central"/>
</dbReference>
<dbReference type="GO" id="GO:0140359">
    <property type="term" value="F:ABC-type transporter activity"/>
    <property type="evidence" value="ECO:0007669"/>
    <property type="project" value="InterPro"/>
</dbReference>
<dbReference type="GO" id="GO:0005524">
    <property type="term" value="F:ATP binding"/>
    <property type="evidence" value="ECO:0007669"/>
    <property type="project" value="UniProtKB-KW"/>
</dbReference>
<dbReference type="GO" id="GO:0016887">
    <property type="term" value="F:ATP hydrolysis activity"/>
    <property type="evidence" value="ECO:0007669"/>
    <property type="project" value="InterPro"/>
</dbReference>
<dbReference type="GO" id="GO:0042626">
    <property type="term" value="F:ATPase-coupled transmembrane transporter activity"/>
    <property type="evidence" value="ECO:0000318"/>
    <property type="project" value="GO_Central"/>
</dbReference>
<dbReference type="GO" id="GO:0015127">
    <property type="term" value="F:bilirubin transmembrane transporter activity"/>
    <property type="evidence" value="ECO:0000315"/>
    <property type="project" value="SGD"/>
</dbReference>
<dbReference type="GO" id="GO:0015086">
    <property type="term" value="F:cadmium ion transmembrane transporter activity"/>
    <property type="evidence" value="ECO:0000314"/>
    <property type="project" value="SGD"/>
</dbReference>
<dbReference type="GO" id="GO:0015723">
    <property type="term" value="P:bilirubin transport"/>
    <property type="evidence" value="ECO:0000315"/>
    <property type="project" value="SGD"/>
</dbReference>
<dbReference type="GO" id="GO:0015691">
    <property type="term" value="P:cadmium ion transport"/>
    <property type="evidence" value="ECO:0000314"/>
    <property type="project" value="SGD"/>
</dbReference>
<dbReference type="GO" id="GO:0055085">
    <property type="term" value="P:transmembrane transport"/>
    <property type="evidence" value="ECO:0000318"/>
    <property type="project" value="GO_Central"/>
</dbReference>
<dbReference type="GO" id="GO:0042144">
    <property type="term" value="P:vacuole fusion, non-autophagic"/>
    <property type="evidence" value="ECO:0000315"/>
    <property type="project" value="SGD"/>
</dbReference>
<dbReference type="CDD" id="cd18579">
    <property type="entry name" value="ABC_6TM_ABCC_D1"/>
    <property type="match status" value="1"/>
</dbReference>
<dbReference type="CDD" id="cd18603">
    <property type="entry name" value="ABC_6TM_MRP1_2_3_6_D2_like"/>
    <property type="match status" value="1"/>
</dbReference>
<dbReference type="CDD" id="cd03250">
    <property type="entry name" value="ABCC_MRP_domain1"/>
    <property type="match status" value="1"/>
</dbReference>
<dbReference type="CDD" id="cd03244">
    <property type="entry name" value="ABCC_MRP_domain2"/>
    <property type="match status" value="1"/>
</dbReference>
<dbReference type="FunFam" id="3.40.50.300:FF:000565">
    <property type="entry name" value="ABC bile acid transporter"/>
    <property type="match status" value="1"/>
</dbReference>
<dbReference type="FunFam" id="1.20.1560.10:FF:000020">
    <property type="entry name" value="ABC metal ion transporter"/>
    <property type="match status" value="1"/>
</dbReference>
<dbReference type="FunFam" id="1.20.1560.10:FF:000013">
    <property type="entry name" value="ABC transporter C family member 2"/>
    <property type="match status" value="1"/>
</dbReference>
<dbReference type="FunFam" id="3.40.50.300:FF:002123">
    <property type="entry name" value="ATP-binding cassette bilirubin transporter"/>
    <property type="match status" value="1"/>
</dbReference>
<dbReference type="Gene3D" id="1.20.1560.10">
    <property type="entry name" value="ABC transporter type 1, transmembrane domain"/>
    <property type="match status" value="2"/>
</dbReference>
<dbReference type="Gene3D" id="3.40.50.300">
    <property type="entry name" value="P-loop containing nucleotide triphosphate hydrolases"/>
    <property type="match status" value="2"/>
</dbReference>
<dbReference type="InterPro" id="IPR003593">
    <property type="entry name" value="AAA+_ATPase"/>
</dbReference>
<dbReference type="InterPro" id="IPR011527">
    <property type="entry name" value="ABC1_TM_dom"/>
</dbReference>
<dbReference type="InterPro" id="IPR036640">
    <property type="entry name" value="ABC1_TM_sf"/>
</dbReference>
<dbReference type="InterPro" id="IPR003439">
    <property type="entry name" value="ABC_transporter-like_ATP-bd"/>
</dbReference>
<dbReference type="InterPro" id="IPR017871">
    <property type="entry name" value="ABC_transporter-like_CS"/>
</dbReference>
<dbReference type="InterPro" id="IPR050173">
    <property type="entry name" value="ABC_transporter_C-like"/>
</dbReference>
<dbReference type="InterPro" id="IPR044746">
    <property type="entry name" value="ABCC_6TM_D1"/>
</dbReference>
<dbReference type="InterPro" id="IPR027417">
    <property type="entry name" value="P-loop_NTPase"/>
</dbReference>
<dbReference type="InterPro" id="IPR056227">
    <property type="entry name" value="TMD0_ABC"/>
</dbReference>
<dbReference type="PANTHER" id="PTHR24223">
    <property type="entry name" value="ATP-BINDING CASSETTE SUB-FAMILY C"/>
    <property type="match status" value="1"/>
</dbReference>
<dbReference type="PANTHER" id="PTHR24223:SF443">
    <property type="entry name" value="MULTIDRUG-RESISTANCE LIKE PROTEIN 1, ISOFORM I"/>
    <property type="match status" value="1"/>
</dbReference>
<dbReference type="Pfam" id="PF00664">
    <property type="entry name" value="ABC_membrane"/>
    <property type="match status" value="2"/>
</dbReference>
<dbReference type="Pfam" id="PF00005">
    <property type="entry name" value="ABC_tran"/>
    <property type="match status" value="2"/>
</dbReference>
<dbReference type="Pfam" id="PF24357">
    <property type="entry name" value="TMD0_ABC"/>
    <property type="match status" value="1"/>
</dbReference>
<dbReference type="SMART" id="SM00382">
    <property type="entry name" value="AAA"/>
    <property type="match status" value="2"/>
</dbReference>
<dbReference type="SUPFAM" id="SSF90123">
    <property type="entry name" value="ABC transporter transmembrane region"/>
    <property type="match status" value="2"/>
</dbReference>
<dbReference type="SUPFAM" id="SSF52540">
    <property type="entry name" value="P-loop containing nucleoside triphosphate hydrolases"/>
    <property type="match status" value="2"/>
</dbReference>
<dbReference type="PROSITE" id="PS50929">
    <property type="entry name" value="ABC_TM1F"/>
    <property type="match status" value="2"/>
</dbReference>
<dbReference type="PROSITE" id="PS00211">
    <property type="entry name" value="ABC_TRANSPORTER_1"/>
    <property type="match status" value="2"/>
</dbReference>
<dbReference type="PROSITE" id="PS50893">
    <property type="entry name" value="ABC_TRANSPORTER_2"/>
    <property type="match status" value="2"/>
</dbReference>
<organism>
    <name type="scientific">Saccharomyces cerevisiae (strain ATCC 204508 / S288c)</name>
    <name type="common">Baker's yeast</name>
    <dbReference type="NCBI Taxonomy" id="559292"/>
    <lineage>
        <taxon>Eukaryota</taxon>
        <taxon>Fungi</taxon>
        <taxon>Dikarya</taxon>
        <taxon>Ascomycota</taxon>
        <taxon>Saccharomycotina</taxon>
        <taxon>Saccharomycetes</taxon>
        <taxon>Saccharomycetales</taxon>
        <taxon>Saccharomycetaceae</taxon>
        <taxon>Saccharomyces</taxon>
    </lineage>
</organism>